<protein>
    <recommendedName>
        <fullName evidence="1">Crossover junction endodeoxyribonuclease RuvC</fullName>
        <ecNumber evidence="1">3.1.21.10</ecNumber>
    </recommendedName>
    <alternativeName>
        <fullName evidence="1">Holliday junction nuclease RuvC</fullName>
    </alternativeName>
    <alternativeName>
        <fullName evidence="1">Holliday junction resolvase RuvC</fullName>
    </alternativeName>
</protein>
<sequence>MRILGIDPGTLVVGYGIIETANDELTLVGFSSLTPPACAPIPQRLAYIYKGLVEVIELYQPDEVAVESPFADKNIKSALAIGKAQAVALLAAANHSLPVTEYSPACIKSRVAGSGNASKEQIQEMVRLLLNLAEIPQPNDAADALAVAICHHSQRAFTNIISQGDLT</sequence>
<comment type="function">
    <text evidence="1">The RuvA-RuvB-RuvC complex processes Holliday junction (HJ) DNA during genetic recombination and DNA repair. Endonuclease that resolves HJ intermediates. Cleaves cruciform DNA by making single-stranded nicks across the HJ at symmetrical positions within the homologous arms, yielding a 5'-phosphate and a 3'-hydroxyl group; requires a central core of homology in the junction. The consensus cleavage sequence is 5'-(A/T)TT(C/G)-3'. Cleavage occurs on the 3'-side of the TT dinucleotide at the point of strand exchange. HJ branch migration catalyzed by RuvA-RuvB allows RuvC to scan DNA until it finds its consensus sequence, where it cleaves and resolves the cruciform DNA.</text>
</comment>
<comment type="catalytic activity">
    <reaction evidence="1">
        <text>Endonucleolytic cleavage at a junction such as a reciprocal single-stranded crossover between two homologous DNA duplexes (Holliday junction).</text>
        <dbReference type="EC" id="3.1.21.10"/>
    </reaction>
</comment>
<comment type="cofactor">
    <cofactor evidence="1">
        <name>Mg(2+)</name>
        <dbReference type="ChEBI" id="CHEBI:18420"/>
    </cofactor>
    <text evidence="1">Binds 2 Mg(2+) ion per subunit.</text>
</comment>
<comment type="subunit">
    <text evidence="1">Homodimer which binds Holliday junction (HJ) DNA. The HJ becomes 2-fold symmetrical on binding to RuvC with unstacked arms; it has a different conformation from HJ DNA in complex with RuvA. In the full resolvosome a probable DNA-RuvA(4)-RuvB(12)-RuvC(2) complex forms which resolves the HJ.</text>
</comment>
<comment type="subcellular location">
    <subcellularLocation>
        <location evidence="1">Cytoplasm</location>
    </subcellularLocation>
</comment>
<comment type="similarity">
    <text evidence="1">Belongs to the RuvC family.</text>
</comment>
<accession>A5FS25</accession>
<feature type="chain" id="PRO_1000074484" description="Crossover junction endodeoxyribonuclease RuvC">
    <location>
        <begin position="1"/>
        <end position="167"/>
    </location>
</feature>
<feature type="active site" evidence="1">
    <location>
        <position position="7"/>
    </location>
</feature>
<feature type="active site" evidence="1">
    <location>
        <position position="67"/>
    </location>
</feature>
<feature type="active site" evidence="1">
    <location>
        <position position="140"/>
    </location>
</feature>
<feature type="binding site" evidence="1">
    <location>
        <position position="7"/>
    </location>
    <ligand>
        <name>Mg(2+)</name>
        <dbReference type="ChEBI" id="CHEBI:18420"/>
        <label>1</label>
    </ligand>
</feature>
<feature type="binding site" evidence="1">
    <location>
        <position position="67"/>
    </location>
    <ligand>
        <name>Mg(2+)</name>
        <dbReference type="ChEBI" id="CHEBI:18420"/>
        <label>2</label>
    </ligand>
</feature>
<feature type="binding site" evidence="1">
    <location>
        <position position="140"/>
    </location>
    <ligand>
        <name>Mg(2+)</name>
        <dbReference type="ChEBI" id="CHEBI:18420"/>
        <label>1</label>
    </ligand>
</feature>
<reference key="1">
    <citation type="submission" date="2007-05" db="EMBL/GenBank/DDBJ databases">
        <title>Complete sequence of Dehalococcoides sp. BAV1.</title>
        <authorList>
            <consortium name="US DOE Joint Genome Institute"/>
            <person name="Copeland A."/>
            <person name="Lucas S."/>
            <person name="Lapidus A."/>
            <person name="Barry K."/>
            <person name="Detter J.C."/>
            <person name="Glavina del Rio T."/>
            <person name="Hammon N."/>
            <person name="Israni S."/>
            <person name="Pitluck S."/>
            <person name="Lowry S."/>
            <person name="Clum A."/>
            <person name="Schmutz J."/>
            <person name="Larimer F."/>
            <person name="Land M."/>
            <person name="Hauser L."/>
            <person name="Kyrpides N."/>
            <person name="Kim E."/>
            <person name="Ritalahti K.M."/>
            <person name="Loeffler F."/>
            <person name="Richardson P."/>
        </authorList>
    </citation>
    <scope>NUCLEOTIDE SEQUENCE [LARGE SCALE GENOMIC DNA]</scope>
    <source>
        <strain>ATCC BAA-2100 / JCM 16839 / KCTC 5957 / BAV1</strain>
    </source>
</reference>
<keyword id="KW-0963">Cytoplasm</keyword>
<keyword id="KW-0227">DNA damage</keyword>
<keyword id="KW-0233">DNA recombination</keyword>
<keyword id="KW-0234">DNA repair</keyword>
<keyword id="KW-0238">DNA-binding</keyword>
<keyword id="KW-0255">Endonuclease</keyword>
<keyword id="KW-0378">Hydrolase</keyword>
<keyword id="KW-0460">Magnesium</keyword>
<keyword id="KW-0479">Metal-binding</keyword>
<keyword id="KW-0540">Nuclease</keyword>
<name>RUVC_DEHMB</name>
<proteinExistence type="inferred from homology"/>
<organism>
    <name type="scientific">Dehalococcoides mccartyi (strain ATCC BAA-2100 / JCM 16839 / KCTC 5957 / BAV1)</name>
    <dbReference type="NCBI Taxonomy" id="216389"/>
    <lineage>
        <taxon>Bacteria</taxon>
        <taxon>Bacillati</taxon>
        <taxon>Chloroflexota</taxon>
        <taxon>Dehalococcoidia</taxon>
        <taxon>Dehalococcoidales</taxon>
        <taxon>Dehalococcoidaceae</taxon>
        <taxon>Dehalococcoides</taxon>
    </lineage>
</organism>
<gene>
    <name evidence="1" type="primary">ruvC</name>
    <name type="ordered locus">DehaBAV1_0420</name>
</gene>
<evidence type="ECO:0000255" key="1">
    <source>
        <dbReference type="HAMAP-Rule" id="MF_00034"/>
    </source>
</evidence>
<dbReference type="EC" id="3.1.21.10" evidence="1"/>
<dbReference type="EMBL" id="CP000688">
    <property type="protein sequence ID" value="ABQ17005.1"/>
    <property type="molecule type" value="Genomic_DNA"/>
</dbReference>
<dbReference type="SMR" id="A5FS25"/>
<dbReference type="KEGG" id="deb:DehaBAV1_0420"/>
<dbReference type="PATRIC" id="fig|216389.18.peg.463"/>
<dbReference type="HOGENOM" id="CLU_091257_3_1_0"/>
<dbReference type="GO" id="GO:0005737">
    <property type="term" value="C:cytoplasm"/>
    <property type="evidence" value="ECO:0007669"/>
    <property type="project" value="UniProtKB-SubCell"/>
</dbReference>
<dbReference type="GO" id="GO:0048476">
    <property type="term" value="C:Holliday junction resolvase complex"/>
    <property type="evidence" value="ECO:0007669"/>
    <property type="project" value="UniProtKB-UniRule"/>
</dbReference>
<dbReference type="GO" id="GO:0008821">
    <property type="term" value="F:crossover junction DNA endonuclease activity"/>
    <property type="evidence" value="ECO:0007669"/>
    <property type="project" value="UniProtKB-UniRule"/>
</dbReference>
<dbReference type="GO" id="GO:0003677">
    <property type="term" value="F:DNA binding"/>
    <property type="evidence" value="ECO:0007669"/>
    <property type="project" value="UniProtKB-KW"/>
</dbReference>
<dbReference type="GO" id="GO:0000287">
    <property type="term" value="F:magnesium ion binding"/>
    <property type="evidence" value="ECO:0007669"/>
    <property type="project" value="UniProtKB-UniRule"/>
</dbReference>
<dbReference type="GO" id="GO:0006310">
    <property type="term" value="P:DNA recombination"/>
    <property type="evidence" value="ECO:0007669"/>
    <property type="project" value="UniProtKB-UniRule"/>
</dbReference>
<dbReference type="GO" id="GO:0006281">
    <property type="term" value="P:DNA repair"/>
    <property type="evidence" value="ECO:0007669"/>
    <property type="project" value="UniProtKB-UniRule"/>
</dbReference>
<dbReference type="CDD" id="cd16962">
    <property type="entry name" value="RuvC"/>
    <property type="match status" value="1"/>
</dbReference>
<dbReference type="FunFam" id="3.30.420.10:FF:000002">
    <property type="entry name" value="Crossover junction endodeoxyribonuclease RuvC"/>
    <property type="match status" value="1"/>
</dbReference>
<dbReference type="Gene3D" id="3.30.420.10">
    <property type="entry name" value="Ribonuclease H-like superfamily/Ribonuclease H"/>
    <property type="match status" value="1"/>
</dbReference>
<dbReference type="HAMAP" id="MF_00034">
    <property type="entry name" value="RuvC"/>
    <property type="match status" value="1"/>
</dbReference>
<dbReference type="InterPro" id="IPR012337">
    <property type="entry name" value="RNaseH-like_sf"/>
</dbReference>
<dbReference type="InterPro" id="IPR036397">
    <property type="entry name" value="RNaseH_sf"/>
</dbReference>
<dbReference type="InterPro" id="IPR020563">
    <property type="entry name" value="X-over_junc_endoDNase_Mg_BS"/>
</dbReference>
<dbReference type="InterPro" id="IPR002176">
    <property type="entry name" value="X-over_junc_endoDNase_RuvC"/>
</dbReference>
<dbReference type="NCBIfam" id="NF000711">
    <property type="entry name" value="PRK00039.2-1"/>
    <property type="match status" value="1"/>
</dbReference>
<dbReference type="NCBIfam" id="TIGR00228">
    <property type="entry name" value="ruvC"/>
    <property type="match status" value="1"/>
</dbReference>
<dbReference type="PANTHER" id="PTHR30194">
    <property type="entry name" value="CROSSOVER JUNCTION ENDODEOXYRIBONUCLEASE RUVC"/>
    <property type="match status" value="1"/>
</dbReference>
<dbReference type="PANTHER" id="PTHR30194:SF3">
    <property type="entry name" value="CROSSOVER JUNCTION ENDODEOXYRIBONUCLEASE RUVC"/>
    <property type="match status" value="1"/>
</dbReference>
<dbReference type="Pfam" id="PF02075">
    <property type="entry name" value="RuvC"/>
    <property type="match status" value="1"/>
</dbReference>
<dbReference type="PRINTS" id="PR00696">
    <property type="entry name" value="RSOLVASERUVC"/>
</dbReference>
<dbReference type="SUPFAM" id="SSF53098">
    <property type="entry name" value="Ribonuclease H-like"/>
    <property type="match status" value="1"/>
</dbReference>
<dbReference type="PROSITE" id="PS01321">
    <property type="entry name" value="RUVC"/>
    <property type="match status" value="1"/>
</dbReference>